<name>FLJK_CAUVC</name>
<feature type="chain" id="PRO_0000182601" description="Flagellin FljK">
    <location>
        <begin position="1"/>
        <end position="273"/>
    </location>
</feature>
<feature type="helix" evidence="2">
    <location>
        <begin position="10"/>
        <end position="35"/>
    </location>
</feature>
<feature type="strand" evidence="2">
    <location>
        <begin position="36"/>
        <end position="38"/>
    </location>
</feature>
<feature type="turn" evidence="2">
    <location>
        <begin position="42"/>
        <end position="44"/>
    </location>
</feature>
<feature type="helix" evidence="2">
    <location>
        <begin position="46"/>
        <end position="100"/>
    </location>
</feature>
<feature type="helix" evidence="2">
    <location>
        <begin position="107"/>
        <end position="129"/>
    </location>
</feature>
<feature type="strand" evidence="2">
    <location>
        <begin position="138"/>
        <end position="142"/>
    </location>
</feature>
<feature type="strand" evidence="2">
    <location>
        <begin position="144"/>
        <end position="149"/>
    </location>
</feature>
<feature type="strand" evidence="2">
    <location>
        <begin position="156"/>
        <end position="160"/>
    </location>
</feature>
<feature type="turn" evidence="2">
    <location>
        <begin position="166"/>
        <end position="170"/>
    </location>
</feature>
<feature type="helix" evidence="2">
    <location>
        <begin position="182"/>
        <end position="233"/>
    </location>
</feature>
<feature type="helix" evidence="2">
    <location>
        <begin position="237"/>
        <end position="262"/>
    </location>
</feature>
<feature type="turn" evidence="2">
    <location>
        <begin position="263"/>
        <end position="265"/>
    </location>
</feature>
<feature type="helix" evidence="2">
    <location>
        <begin position="266"/>
        <end position="271"/>
    </location>
</feature>
<sequence>MALNSINTNAGAMIALQNLNGTNSELTTVQQRINTGKKIASAKDNGAIWATAKNQSATAASMNAVKDSLQRGQSTIDVALAAGDTITDLLGKMKEKALAASDTSLNTASFNALKSDFDSLRDQIEKAATNAKFNGVSIADGSTTKLTFLANSDGSGFTVNAKTISLAGIGLTTTSTFTTAAAAKTMIGTIDTALQTATNKLASLGTSSVGLDTHLTFVGKLQDSLDAGVGNLVDADLAKESAKLQSLQTKQQLGVQALSIANQSSSSILSLFR</sequence>
<gene>
    <name type="primary">fljK</name>
    <name type="ordered locus">CC_1461</name>
</gene>
<evidence type="ECO:0000305" key="1"/>
<evidence type="ECO:0007829" key="2">
    <source>
        <dbReference type="PDB" id="6XKY"/>
    </source>
</evidence>
<organism>
    <name type="scientific">Caulobacter vibrioides (strain ATCC 19089 / CIP 103742 / CB 15)</name>
    <name type="common">Caulobacter crescentus</name>
    <dbReference type="NCBI Taxonomy" id="190650"/>
    <lineage>
        <taxon>Bacteria</taxon>
        <taxon>Pseudomonadati</taxon>
        <taxon>Pseudomonadota</taxon>
        <taxon>Alphaproteobacteria</taxon>
        <taxon>Caulobacterales</taxon>
        <taxon>Caulobacteraceae</taxon>
        <taxon>Caulobacter</taxon>
    </lineage>
</organism>
<reference key="1">
    <citation type="journal article" date="2000" name="J. Bacteriol.">
        <title>A family of six flagellin genes contributes to the Caulobacter crescentus flagellar filament.</title>
        <authorList>
            <person name="Ely B."/>
            <person name="Ely T.W."/>
            <person name="Crymes W.B. Jr."/>
            <person name="Minnich S.A."/>
        </authorList>
    </citation>
    <scope>NUCLEOTIDE SEQUENCE [GENOMIC DNA]</scope>
    <source>
        <strain>ATCC 19089 / CIP 103742 / CB 15</strain>
    </source>
</reference>
<reference key="2">
    <citation type="journal article" date="2001" name="Proc. Natl. Acad. Sci. U.S.A.">
        <title>Complete genome sequence of Caulobacter crescentus.</title>
        <authorList>
            <person name="Nierman W.C."/>
            <person name="Feldblyum T.V."/>
            <person name="Laub M.T."/>
            <person name="Paulsen I.T."/>
            <person name="Nelson K.E."/>
            <person name="Eisen J.A."/>
            <person name="Heidelberg J.F."/>
            <person name="Alley M.R.K."/>
            <person name="Ohta N."/>
            <person name="Maddock J.R."/>
            <person name="Potocka I."/>
            <person name="Nelson W.C."/>
            <person name="Newton A."/>
            <person name="Stephens C."/>
            <person name="Phadke N.D."/>
            <person name="Ely B."/>
            <person name="DeBoy R.T."/>
            <person name="Dodson R.J."/>
            <person name="Durkin A.S."/>
            <person name="Gwinn M.L."/>
            <person name="Haft D.H."/>
            <person name="Kolonay J.F."/>
            <person name="Smit J."/>
            <person name="Craven M.B."/>
            <person name="Khouri H.M."/>
            <person name="Shetty J."/>
            <person name="Berry K.J."/>
            <person name="Utterback T.R."/>
            <person name="Tran K."/>
            <person name="Wolf A.M."/>
            <person name="Vamathevan J.J."/>
            <person name="Ermolaeva M.D."/>
            <person name="White O."/>
            <person name="Salzberg S.L."/>
            <person name="Venter J.C."/>
            <person name="Shapiro L."/>
            <person name="Fraser C.M."/>
        </authorList>
    </citation>
    <scope>NUCLEOTIDE SEQUENCE [LARGE SCALE GENOMIC DNA]</scope>
    <source>
        <strain>ATCC 19089 / CIP 103742 / CB 15</strain>
    </source>
</reference>
<reference key="3">
    <citation type="journal article" date="1987" name="Proc. Natl. Acad. Sci. U.S.A.">
        <title>Promoter mapping and cell cycle regulation of flagellin gene transcription in Caulobacter crescentus.</title>
        <authorList>
            <person name="Minnich S.A."/>
            <person name="Newton A."/>
        </authorList>
    </citation>
    <scope>NUCLEOTIDE SEQUENCE [GENOMIC DNA] OF 1-17</scope>
    <source>
        <strain>ATCC 19089 / CIP 103742 / CB 15</strain>
    </source>
</reference>
<keyword id="KW-0002">3D-structure</keyword>
<keyword id="KW-0975">Bacterial flagellum</keyword>
<keyword id="KW-1185">Reference proteome</keyword>
<keyword id="KW-0964">Secreted</keyword>
<accession>P18913</accession>
<proteinExistence type="evidence at protein level"/>
<protein>
    <recommendedName>
        <fullName>Flagellin FljK</fullName>
    </recommendedName>
    <alternativeName>
        <fullName>25 kDa flagellin</fullName>
    </alternativeName>
</protein>
<dbReference type="EMBL" id="AF089835">
    <property type="protein sequence ID" value="AAC35989.2"/>
    <property type="molecule type" value="Genomic_DNA"/>
</dbReference>
<dbReference type="EMBL" id="AE005673">
    <property type="protein sequence ID" value="AAK23442.1"/>
    <property type="molecule type" value="Genomic_DNA"/>
</dbReference>
<dbReference type="EMBL" id="AH000872">
    <property type="protein sequence ID" value="AAA23049.1"/>
    <property type="molecule type" value="Genomic_DNA"/>
</dbReference>
<dbReference type="PIR" id="B25882">
    <property type="entry name" value="B25882"/>
</dbReference>
<dbReference type="PIR" id="F87430">
    <property type="entry name" value="F87430"/>
</dbReference>
<dbReference type="RefSeq" id="NP_420274.1">
    <property type="nucleotide sequence ID" value="NC_002696.2"/>
</dbReference>
<dbReference type="RefSeq" id="WP_010919337.1">
    <property type="nucleotide sequence ID" value="NC_002696.2"/>
</dbReference>
<dbReference type="PDB" id="6XKY">
    <property type="method" value="EM"/>
    <property type="resolution" value="3.20 A"/>
    <property type="chains" value="A/B/C/D/E/F/G/H/I/J/K/L/M/N/O/P/Q/R/S/T=1-273"/>
</dbReference>
<dbReference type="PDB" id="6XL0">
    <property type="method" value="EM"/>
    <property type="resolution" value="3.40 A"/>
    <property type="chains" value="A/B/C/D/E/F/G/H/I/J/K/L/M/N/O/P/Q/R/S/T=1-273"/>
</dbReference>
<dbReference type="PDB" id="8UXJ">
    <property type="method" value="EM"/>
    <property type="resolution" value="2.71 A"/>
    <property type="chains" value="A/B/C/D/E/F/G/H/I/J/K/L/M/N/O/P/Q/R/S/T/U/V/W/X/Y/Z/a/b/c/d=3-272"/>
</dbReference>
<dbReference type="PDBsum" id="6XKY"/>
<dbReference type="PDBsum" id="6XL0"/>
<dbReference type="PDBsum" id="8UXJ"/>
<dbReference type="EMDB" id="EMD-42766"/>
<dbReference type="SMR" id="P18913"/>
<dbReference type="STRING" id="190650.CC_1461"/>
<dbReference type="EnsemblBacteria" id="AAK23442">
    <property type="protein sequence ID" value="AAK23442"/>
    <property type="gene ID" value="CC_1461"/>
</dbReference>
<dbReference type="KEGG" id="ccr:CC_1461"/>
<dbReference type="PATRIC" id="fig|190650.5.peg.1487"/>
<dbReference type="eggNOG" id="COG1344">
    <property type="taxonomic scope" value="Bacteria"/>
</dbReference>
<dbReference type="HOGENOM" id="CLU_011142_1_0_5"/>
<dbReference type="BioCyc" id="CAULO:CC1461-MONOMER"/>
<dbReference type="Proteomes" id="UP000001816">
    <property type="component" value="Chromosome"/>
</dbReference>
<dbReference type="GO" id="GO:0009288">
    <property type="term" value="C:bacterial-type flagellum"/>
    <property type="evidence" value="ECO:0007669"/>
    <property type="project" value="UniProtKB-SubCell"/>
</dbReference>
<dbReference type="GO" id="GO:0005576">
    <property type="term" value="C:extracellular region"/>
    <property type="evidence" value="ECO:0007669"/>
    <property type="project" value="UniProtKB-SubCell"/>
</dbReference>
<dbReference type="GO" id="GO:0005198">
    <property type="term" value="F:structural molecule activity"/>
    <property type="evidence" value="ECO:0007669"/>
    <property type="project" value="InterPro"/>
</dbReference>
<dbReference type="Gene3D" id="1.20.1330.10">
    <property type="entry name" value="f41 fragment of flagellin, N-terminal domain"/>
    <property type="match status" value="1"/>
</dbReference>
<dbReference type="InterPro" id="IPR001492">
    <property type="entry name" value="Flagellin"/>
</dbReference>
<dbReference type="InterPro" id="IPR046358">
    <property type="entry name" value="Flagellin_C"/>
</dbReference>
<dbReference type="InterPro" id="IPR001029">
    <property type="entry name" value="Flagellin_N"/>
</dbReference>
<dbReference type="PANTHER" id="PTHR42792">
    <property type="entry name" value="FLAGELLIN"/>
    <property type="match status" value="1"/>
</dbReference>
<dbReference type="PANTHER" id="PTHR42792:SF2">
    <property type="entry name" value="FLAGELLIN"/>
    <property type="match status" value="1"/>
</dbReference>
<dbReference type="Pfam" id="PF00700">
    <property type="entry name" value="Flagellin_C"/>
    <property type="match status" value="1"/>
</dbReference>
<dbReference type="Pfam" id="PF00669">
    <property type="entry name" value="Flagellin_N"/>
    <property type="match status" value="1"/>
</dbReference>
<dbReference type="PRINTS" id="PR00207">
    <property type="entry name" value="FLAGELLIN"/>
</dbReference>
<dbReference type="SUPFAM" id="SSF64518">
    <property type="entry name" value="Phase 1 flagellin"/>
    <property type="match status" value="1"/>
</dbReference>
<comment type="function">
    <text>Flagellin is the subunit protein which polymerizes to form the filaments of bacterial flagella.</text>
</comment>
<comment type="subunit">
    <text>In C.crescentus, the flagellar filament is composed of multiple flagellins of 29 kDa; 27 kDa and 25 kDa.</text>
</comment>
<comment type="subcellular location">
    <subcellularLocation>
        <location>Secreted</location>
    </subcellularLocation>
    <subcellularLocation>
        <location>Bacterial flagellum</location>
    </subcellularLocation>
</comment>
<comment type="similarity">
    <text evidence="1">Belongs to the bacterial flagellin family.</text>
</comment>